<gene>
    <name type="primary">stbA</name>
</gene>
<keyword id="KW-0229">DNA integration</keyword>
<keyword id="KW-0233">DNA recombination</keyword>
<keyword id="KW-0238">DNA-binding</keyword>
<keyword id="KW-0614">Plasmid</keyword>
<evidence type="ECO:0000255" key="1"/>
<evidence type="ECO:0000255" key="2">
    <source>
        <dbReference type="PROSITE-ProRule" id="PRU01072"/>
    </source>
</evidence>
<evidence type="ECO:0000305" key="3"/>
<name>STBA_PSEUB</name>
<organism>
    <name type="scientific">Pseudomonas syringae pv. tomato</name>
    <dbReference type="NCBI Taxonomy" id="323"/>
    <lineage>
        <taxon>Bacteria</taxon>
        <taxon>Pseudomonadati</taxon>
        <taxon>Pseudomonadota</taxon>
        <taxon>Gammaproteobacteria</taxon>
        <taxon>Pseudomonadales</taxon>
        <taxon>Pseudomonadaceae</taxon>
        <taxon>Pseudomonas</taxon>
    </lineage>
</organism>
<protein>
    <recommendedName>
        <fullName>Resolvase</fullName>
    </recommendedName>
</protein>
<proteinExistence type="inferred from homology"/>
<accession>Q52563</accession>
<reference key="1">
    <citation type="journal article" date="1997" name="FEBS Lett.">
        <title>Avirulence gene D of Pseudomonas syringae pv. tomato may have undergone horizontal gene transfer.</title>
        <authorList>
            <person name="Hanekamp T."/>
            <person name="Kobayashi D."/>
            <person name="Hayes S."/>
            <person name="Stayton M.M."/>
        </authorList>
    </citation>
    <scope>NUCLEOTIDE SEQUENCE [GENOMIC DNA]</scope>
</reference>
<comment type="function">
    <text>Site-specific recombination protein.</text>
</comment>
<comment type="similarity">
    <text evidence="3">Belongs to the site-specific recombinase resolvase family.</text>
</comment>
<dbReference type="EMBL" id="L48985">
    <property type="protein sequence ID" value="AAB81646.1"/>
    <property type="molecule type" value="Genomic_DNA"/>
</dbReference>
<dbReference type="RefSeq" id="WP_054091164.1">
    <property type="nucleotide sequence ID" value="NZ_SNVF01000042.1"/>
</dbReference>
<dbReference type="SMR" id="Q52563"/>
<dbReference type="GO" id="GO:0003677">
    <property type="term" value="F:DNA binding"/>
    <property type="evidence" value="ECO:0007669"/>
    <property type="project" value="UniProtKB-KW"/>
</dbReference>
<dbReference type="GO" id="GO:0000150">
    <property type="term" value="F:DNA strand exchange activity"/>
    <property type="evidence" value="ECO:0007669"/>
    <property type="project" value="InterPro"/>
</dbReference>
<dbReference type="GO" id="GO:0015074">
    <property type="term" value="P:DNA integration"/>
    <property type="evidence" value="ECO:0007669"/>
    <property type="project" value="UniProtKB-KW"/>
</dbReference>
<dbReference type="Gene3D" id="3.40.50.1390">
    <property type="entry name" value="Resolvase, N-terminal catalytic domain"/>
    <property type="match status" value="1"/>
</dbReference>
<dbReference type="InterPro" id="IPR006118">
    <property type="entry name" value="Recombinase_CS"/>
</dbReference>
<dbReference type="InterPro" id="IPR006119">
    <property type="entry name" value="Resolv_N"/>
</dbReference>
<dbReference type="InterPro" id="IPR036162">
    <property type="entry name" value="Resolvase-like_N_sf"/>
</dbReference>
<dbReference type="InterPro" id="IPR006120">
    <property type="entry name" value="Resolvase_HTH_dom"/>
</dbReference>
<dbReference type="InterPro" id="IPR050639">
    <property type="entry name" value="SSR_resolvase"/>
</dbReference>
<dbReference type="PANTHER" id="PTHR30461">
    <property type="entry name" value="DNA-INVERTASE FROM LAMBDOID PROPHAGE"/>
    <property type="match status" value="1"/>
</dbReference>
<dbReference type="PANTHER" id="PTHR30461:SF25">
    <property type="entry name" value="RESOLVASE-RELATED"/>
    <property type="match status" value="1"/>
</dbReference>
<dbReference type="Pfam" id="PF02796">
    <property type="entry name" value="HTH_7"/>
    <property type="match status" value="1"/>
</dbReference>
<dbReference type="Pfam" id="PF00239">
    <property type="entry name" value="Resolvase"/>
    <property type="match status" value="1"/>
</dbReference>
<dbReference type="SMART" id="SM00857">
    <property type="entry name" value="Resolvase"/>
    <property type="match status" value="1"/>
</dbReference>
<dbReference type="SUPFAM" id="SSF53041">
    <property type="entry name" value="Resolvase-like"/>
    <property type="match status" value="1"/>
</dbReference>
<dbReference type="PROSITE" id="PS00397">
    <property type="entry name" value="RECOMBINASES_1"/>
    <property type="match status" value="1"/>
</dbReference>
<dbReference type="PROSITE" id="PS00398">
    <property type="entry name" value="RECOMBINASES_2"/>
    <property type="match status" value="1"/>
</dbReference>
<dbReference type="PROSITE" id="PS51736">
    <property type="entry name" value="RECOMBINASES_3"/>
    <property type="match status" value="1"/>
</dbReference>
<geneLocation type="plasmid"/>
<sequence>MTTLNVARVYLRVSSEDQDLQRQEAIIGNARESGYYVAAVYREKASGARSDRPELLRMIEDLQPGEVVIAEKIDRISRLPLVEAEKLVDAIRAKGARLAVPGIVDLSQLTEASRGVAKVVLQGVQDMLLRVALQIARDDFEDRRERQRQGIDLAKGAGRYAGRKPDTKMHERVIALKSGGCSIAETARLAGVSVSQVKRVWAQNQTKDKV</sequence>
<feature type="chain" id="PRO_0000196378" description="Resolvase">
    <location>
        <begin position="1"/>
        <end position="210"/>
    </location>
</feature>
<feature type="domain" description="Resolvase/invertase-type recombinase catalytic" evidence="2">
    <location>
        <begin position="6"/>
        <end position="150"/>
    </location>
</feature>
<feature type="DNA-binding region" description="H-T-H motif" evidence="1">
    <location>
        <begin position="191"/>
        <end position="210"/>
    </location>
</feature>
<feature type="active site" description="O-(5'-phospho-DNA)-serine intermediate" evidence="2">
    <location>
        <position position="14"/>
    </location>
</feature>